<dbReference type="EMBL" id="AB030278">
    <property type="protein sequence ID" value="BAA90261.1"/>
    <property type="molecule type" value="mRNA"/>
</dbReference>
<dbReference type="EMBL" id="AB009056">
    <property type="protein sequence ID" value="BAB08725.1"/>
    <property type="molecule type" value="Genomic_DNA"/>
</dbReference>
<dbReference type="EMBL" id="CP002688">
    <property type="protein sequence ID" value="AED93246.1"/>
    <property type="molecule type" value="Genomic_DNA"/>
</dbReference>
<dbReference type="EMBL" id="BT002027">
    <property type="protein sequence ID" value="AAN72038.1"/>
    <property type="molecule type" value="mRNA"/>
</dbReference>
<dbReference type="EMBL" id="BT008819">
    <property type="protein sequence ID" value="AAP68258.1"/>
    <property type="molecule type" value="mRNA"/>
</dbReference>
<dbReference type="SMR" id="Q9MBA2"/>
<dbReference type="BioGRID" id="17742">
    <property type="interactions" value="3"/>
</dbReference>
<dbReference type="FunCoup" id="Q9MBA2">
    <property type="interactions" value="564"/>
</dbReference>
<dbReference type="IntAct" id="Q9MBA2">
    <property type="interactions" value="2"/>
</dbReference>
<dbReference type="MINT" id="Q9MBA2"/>
<dbReference type="STRING" id="3702.Q9MBA2"/>
<dbReference type="GlyGen" id="Q9MBA2">
    <property type="glycosylation" value="1 site"/>
</dbReference>
<dbReference type="MetOSite" id="Q9MBA2"/>
<dbReference type="PaxDb" id="3702-AT5G24020.1"/>
<dbReference type="ProteomicsDB" id="237051"/>
<dbReference type="EnsemblPlants" id="AT5G24020.1">
    <property type="protein sequence ID" value="AT5G24020.1"/>
    <property type="gene ID" value="AT5G24020"/>
</dbReference>
<dbReference type="GeneID" id="832467"/>
<dbReference type="Gramene" id="AT5G24020.1">
    <property type="protein sequence ID" value="AT5G24020.1"/>
    <property type="gene ID" value="AT5G24020"/>
</dbReference>
<dbReference type="KEGG" id="ath:AT5G24020"/>
<dbReference type="Araport" id="AT5G24020"/>
<dbReference type="TAIR" id="AT5G24020">
    <property type="gene designation" value="MIND"/>
</dbReference>
<dbReference type="eggNOG" id="KOG3022">
    <property type="taxonomic scope" value="Eukaryota"/>
</dbReference>
<dbReference type="HOGENOM" id="CLU_037612_0_1_1"/>
<dbReference type="InParanoid" id="Q9MBA2"/>
<dbReference type="OMA" id="CESAKAY"/>
<dbReference type="PhylomeDB" id="Q9MBA2"/>
<dbReference type="PRO" id="PR:Q9MBA2"/>
<dbReference type="Proteomes" id="UP000006548">
    <property type="component" value="Chromosome 5"/>
</dbReference>
<dbReference type="ExpressionAtlas" id="Q9MBA2">
    <property type="expression patterns" value="baseline and differential"/>
</dbReference>
<dbReference type="GO" id="GO:0009507">
    <property type="term" value="C:chloroplast"/>
    <property type="evidence" value="ECO:0000314"/>
    <property type="project" value="TAIR"/>
</dbReference>
<dbReference type="GO" id="GO:0009941">
    <property type="term" value="C:chloroplast envelope"/>
    <property type="evidence" value="ECO:0007005"/>
    <property type="project" value="TAIR"/>
</dbReference>
<dbReference type="GO" id="GO:0009706">
    <property type="term" value="C:chloroplast inner membrane"/>
    <property type="evidence" value="ECO:0007669"/>
    <property type="project" value="UniProtKB-SubCell"/>
</dbReference>
<dbReference type="GO" id="GO:0009570">
    <property type="term" value="C:chloroplast stroma"/>
    <property type="evidence" value="ECO:0007005"/>
    <property type="project" value="TAIR"/>
</dbReference>
<dbReference type="GO" id="GO:0005524">
    <property type="term" value="F:ATP binding"/>
    <property type="evidence" value="ECO:0007669"/>
    <property type="project" value="UniProtKB-KW"/>
</dbReference>
<dbReference type="GO" id="GO:0016887">
    <property type="term" value="F:ATP hydrolysis activity"/>
    <property type="evidence" value="ECO:0000304"/>
    <property type="project" value="TAIR"/>
</dbReference>
<dbReference type="GO" id="GO:0030899">
    <property type="term" value="F:calcium-dependent ATPase activity"/>
    <property type="evidence" value="ECO:0000314"/>
    <property type="project" value="TAIR"/>
</dbReference>
<dbReference type="GO" id="GO:0042802">
    <property type="term" value="F:identical protein binding"/>
    <property type="evidence" value="ECO:0000353"/>
    <property type="project" value="IntAct"/>
</dbReference>
<dbReference type="GO" id="GO:0042803">
    <property type="term" value="F:protein homodimerization activity"/>
    <property type="evidence" value="ECO:0000353"/>
    <property type="project" value="TAIR"/>
</dbReference>
<dbReference type="GO" id="GO:0010020">
    <property type="term" value="P:chloroplast fission"/>
    <property type="evidence" value="ECO:0000315"/>
    <property type="project" value="UniProtKB"/>
</dbReference>
<dbReference type="CDD" id="cd02036">
    <property type="entry name" value="MinD"/>
    <property type="match status" value="1"/>
</dbReference>
<dbReference type="FunFam" id="3.40.50.300:FF:000068">
    <property type="entry name" value="Site-determining protein"/>
    <property type="match status" value="1"/>
</dbReference>
<dbReference type="Gene3D" id="3.40.50.300">
    <property type="entry name" value="P-loop containing nucleotide triphosphate hydrolases"/>
    <property type="match status" value="1"/>
</dbReference>
<dbReference type="InterPro" id="IPR002586">
    <property type="entry name" value="CobQ/CobB/MinD/ParA_Nub-bd_dom"/>
</dbReference>
<dbReference type="InterPro" id="IPR010223">
    <property type="entry name" value="MinD"/>
</dbReference>
<dbReference type="InterPro" id="IPR027417">
    <property type="entry name" value="P-loop_NTPase"/>
</dbReference>
<dbReference type="InterPro" id="IPR050625">
    <property type="entry name" value="ParA/MinD_ATPase"/>
</dbReference>
<dbReference type="NCBIfam" id="TIGR01968">
    <property type="entry name" value="minD_bact"/>
    <property type="match status" value="1"/>
</dbReference>
<dbReference type="PANTHER" id="PTHR43384:SF6">
    <property type="entry name" value="SEPTUM SITE-DETERMINING PROTEIN MIND HOMOLOG, CHLOROPLASTIC"/>
    <property type="match status" value="1"/>
</dbReference>
<dbReference type="PANTHER" id="PTHR43384">
    <property type="entry name" value="SEPTUM SITE-DETERMINING PROTEIN MIND HOMOLOG, CHLOROPLASTIC-RELATED"/>
    <property type="match status" value="1"/>
</dbReference>
<dbReference type="Pfam" id="PF01656">
    <property type="entry name" value="CbiA"/>
    <property type="match status" value="1"/>
</dbReference>
<dbReference type="SUPFAM" id="SSF52540">
    <property type="entry name" value="P-loop containing nucleoside triphosphate hydrolases"/>
    <property type="match status" value="1"/>
</dbReference>
<feature type="transit peptide" description="Chloroplast" evidence="21">
    <location>
        <begin position="1"/>
        <end position="62"/>
    </location>
</feature>
<feature type="chain" id="PRO_0000406150" description="Septum site-determining protein minD homolog, chloroplastic">
    <location>
        <begin position="63"/>
        <end position="326"/>
    </location>
</feature>
<feature type="binding site" evidence="1">
    <location>
        <begin position="67"/>
        <end position="74"/>
    </location>
    <ligand>
        <name>ATP</name>
        <dbReference type="ChEBI" id="CHEBI:30616"/>
    </ligand>
</feature>
<feature type="mutagenesis site" description="Impaired interaction with MINE1 and loss of ATPase activity, but normal homodimerization." evidence="8">
    <original>K</original>
    <variation>A</variation>
    <location>
        <position position="72"/>
    </location>
</feature>
<feature type="mutagenesis site" description="In arc11; loss of homodimerization, abnormal intraplastidic localization patterns, heterogeneous and reduced population of chloroplasts in mesophyll cells and petals, with normal and larger plastids, due to reduced chloroplast divisions and asymmetrically constricted chloroplasts, and highly elongated and multiple-arrayed chloroplasts in developing green tissues." evidence="2 3 7 15 17">
    <original>A</original>
    <variation>G</variation>
    <location>
        <position position="296"/>
    </location>
</feature>
<reference key="1">
    <citation type="journal article" date="2000" name="Plant Cell Physiol.">
        <title>Chloroplast targeting, distribution and transcriptional fluctuation of AtMinD1, a Eubacteria-type factor critical for chloroplast division.</title>
        <authorList>
            <person name="Kanamaru K."/>
            <person name="Fujiwara M."/>
            <person name="Kim M."/>
            <person name="Nagashima A."/>
            <person name="Nakazato E."/>
            <person name="Tanaka K."/>
            <person name="Takahashi H."/>
        </authorList>
    </citation>
    <scope>NUCLEOTIDE SEQUENCE [MRNA]</scope>
    <scope>FUNCTION</scope>
    <scope>SUBCELLULAR LOCATION</scope>
    <scope>INDUCTION BY SEED GERMINATION</scope>
    <source>
        <strain>cv. Columbia</strain>
        <strain>cv. Landsberg erecta</strain>
        <strain>cv. Wassilewskija</strain>
    </source>
</reference>
<reference key="2">
    <citation type="journal article" date="1998" name="DNA Res.">
        <title>Structural analysis of Arabidopsis thaliana chromosome 5. IV. Sequence features of the regions of 1,456,315 bp covered by nineteen physically assigned P1 and TAC clones.</title>
        <authorList>
            <person name="Sato S."/>
            <person name="Kaneko T."/>
            <person name="Kotani H."/>
            <person name="Nakamura Y."/>
            <person name="Asamizu E."/>
            <person name="Miyajima N."/>
            <person name="Tabata S."/>
        </authorList>
    </citation>
    <scope>NUCLEOTIDE SEQUENCE [LARGE SCALE GENOMIC DNA]</scope>
    <source>
        <strain>cv. Columbia</strain>
    </source>
</reference>
<reference key="3">
    <citation type="journal article" date="2017" name="Plant J.">
        <title>Araport11: a complete reannotation of the Arabidopsis thaliana reference genome.</title>
        <authorList>
            <person name="Cheng C.Y."/>
            <person name="Krishnakumar V."/>
            <person name="Chan A.P."/>
            <person name="Thibaud-Nissen F."/>
            <person name="Schobel S."/>
            <person name="Town C.D."/>
        </authorList>
    </citation>
    <scope>GENOME REANNOTATION</scope>
    <source>
        <strain>cv. Columbia</strain>
    </source>
</reference>
<reference key="4">
    <citation type="journal article" date="2003" name="Science">
        <title>Empirical analysis of transcriptional activity in the Arabidopsis genome.</title>
        <authorList>
            <person name="Yamada K."/>
            <person name="Lim J."/>
            <person name="Dale J.M."/>
            <person name="Chen H."/>
            <person name="Shinn P."/>
            <person name="Palm C.J."/>
            <person name="Southwick A.M."/>
            <person name="Wu H.C."/>
            <person name="Kim C.J."/>
            <person name="Nguyen M."/>
            <person name="Pham P.K."/>
            <person name="Cheuk R.F."/>
            <person name="Karlin-Newmann G."/>
            <person name="Liu S.X."/>
            <person name="Lam B."/>
            <person name="Sakano H."/>
            <person name="Wu T."/>
            <person name="Yu G."/>
            <person name="Miranda M."/>
            <person name="Quach H.L."/>
            <person name="Tripp M."/>
            <person name="Chang C.H."/>
            <person name="Lee J.M."/>
            <person name="Toriumi M.J."/>
            <person name="Chan M.M."/>
            <person name="Tang C.C."/>
            <person name="Onodera C.S."/>
            <person name="Deng J.M."/>
            <person name="Akiyama K."/>
            <person name="Ansari Y."/>
            <person name="Arakawa T."/>
            <person name="Banh J."/>
            <person name="Banno F."/>
            <person name="Bowser L."/>
            <person name="Brooks S.Y."/>
            <person name="Carninci P."/>
            <person name="Chao Q."/>
            <person name="Choy N."/>
            <person name="Enju A."/>
            <person name="Goldsmith A.D."/>
            <person name="Gurjal M."/>
            <person name="Hansen N.F."/>
            <person name="Hayashizaki Y."/>
            <person name="Johnson-Hopson C."/>
            <person name="Hsuan V.W."/>
            <person name="Iida K."/>
            <person name="Karnes M."/>
            <person name="Khan S."/>
            <person name="Koesema E."/>
            <person name="Ishida J."/>
            <person name="Jiang P.X."/>
            <person name="Jones T."/>
            <person name="Kawai J."/>
            <person name="Kamiya A."/>
            <person name="Meyers C."/>
            <person name="Nakajima M."/>
            <person name="Narusaka M."/>
            <person name="Seki M."/>
            <person name="Sakurai T."/>
            <person name="Satou M."/>
            <person name="Tamse R."/>
            <person name="Vaysberg M."/>
            <person name="Wallender E.K."/>
            <person name="Wong C."/>
            <person name="Yamamura Y."/>
            <person name="Yuan S."/>
            <person name="Shinozaki K."/>
            <person name="Davis R.W."/>
            <person name="Theologis A."/>
            <person name="Ecker J.R."/>
        </authorList>
    </citation>
    <scope>NUCLEOTIDE SEQUENCE [LARGE SCALE MRNA]</scope>
    <source>
        <strain>cv. Columbia</strain>
    </source>
</reference>
<reference key="5">
    <citation type="journal article" date="1999" name="Plant J.">
        <title>The distinctive roles of five different ARC genes in the chloroplast division process in Arabidopsis.</title>
        <authorList>
            <person name="Marrison J.L."/>
            <person name="Rutherford S.M."/>
            <person name="Robertson E.J."/>
            <person name="Lister C."/>
            <person name="Dean C."/>
            <person name="Leech R.M."/>
        </authorList>
    </citation>
    <scope>FUNCTION</scope>
    <scope>MUTAGENESIS OF ALA-296</scope>
</reference>
<reference key="6">
    <citation type="journal article" date="2000" name="Curr. Biol.">
        <title>A homologue of the bacterial cell division site-determining factor MinD mediates placement of the chloroplast division apparatus.</title>
        <authorList>
            <person name="Colletti K.S."/>
            <person name="Tattersall E.A."/>
            <person name="Pyke K.A."/>
            <person name="Froelich J.E."/>
            <person name="Stokes K.D."/>
            <person name="Osteryoung K.W."/>
        </authorList>
    </citation>
    <scope>FUNCTION</scope>
    <scope>MUTAGENESIS OF ALA-296</scope>
    <scope>SUBCELLULAR LOCATION</scope>
</reference>
<reference key="7">
    <citation type="journal article" date="2001" name="Planta">
        <title>Overexpression of the Arabidopsis thaliana MinD1 gene alters chloroplast size and number in transgenic tobacco plants.</title>
        <authorList>
            <person name="Dinkins R."/>
            <person name="Reddy M.S.S."/>
            <person name="Leng M."/>
            <person name="Collins G.B."/>
        </authorList>
    </citation>
    <scope>FUNCTION</scope>
</reference>
<reference key="8">
    <citation type="journal article" date="2003" name="Plant Cell">
        <title>ARC6 is a J-domain plastid division protein and an evolutionary descendant of the cyanobacterial cell division protein Ftn2.</title>
        <authorList>
            <person name="Vitha S."/>
            <person name="Froehlich J.E."/>
            <person name="Koksharova O."/>
            <person name="Pyke K.A."/>
            <person name="van Erp H."/>
            <person name="Osteryoung K.W."/>
        </authorList>
    </citation>
    <scope>FUNCTION</scope>
</reference>
<reference key="9">
    <citation type="journal article" date="2004" name="J. Cell Sci.">
        <title>Chloroplast division site placement requires dimerization of the ARC11/AtMinD1 protein in Arabidopsis.</title>
        <authorList>
            <person name="Fujiwara M.T."/>
            <person name="Nakamura A."/>
            <person name="Itoh R."/>
            <person name="Shimada Y."/>
            <person name="Yoshida S."/>
            <person name="Moeller S.G."/>
        </authorList>
    </citation>
    <scope>FUNCTION</scope>
    <scope>MUTAGENESIS OF ALA-296</scope>
    <scope>SUBCELLULAR LOCATION</scope>
    <scope>HOMODIMERIZATION</scope>
    <source>
        <strain>cv. Columbia</strain>
        <strain>cv. Landsberg erecta</strain>
    </source>
</reference>
<reference key="10">
    <citation type="journal article" date="2005" name="J. Biol. Chem.">
        <title>The plastid division protein AtMinD1 is a Ca2+-ATPase stimulated by AtMinE1.</title>
        <authorList>
            <person name="Aldridge C."/>
            <person name="Moeller S.G."/>
        </authorList>
    </citation>
    <scope>FUNCTION AS CALCIUM-DEPENDENT ATPASE</scope>
    <scope>MUTAGENESIS OF LYS-72</scope>
    <scope>HOMODIMERIZATION</scope>
    <scope>INTERACTION WITH MINE1</scope>
    <scope>SUBCELLULAR LOCATION</scope>
    <scope>ACTIVITY REGULATION BY MINE1</scope>
    <scope>BIOPHYSICOCHEMICAL PROPERTIES</scope>
</reference>
<reference key="11">
    <citation type="journal article" date="2005" name="J. Exp. Bot.">
        <title>The molecular biology of plastid division in higher plants.</title>
        <authorList>
            <person name="Aldridge C."/>
            <person name="Maple J."/>
            <person name="Moeller S.G."/>
        </authorList>
    </citation>
    <scope>REVIEW</scope>
</reference>
<reference key="12">
    <citation type="journal article" date="2005" name="Plant J.">
        <title>Plastid division is mediated by combinatorial assembly of plastid division proteins.</title>
        <authorList>
            <person name="Maple J."/>
            <person name="Aldridge C."/>
            <person name="Moeller S.G."/>
        </authorList>
    </citation>
    <scope>HOMODIMERIZATION</scope>
    <scope>INTERACTION WITH MINE1</scope>
    <scope>SUBCELLULAR LOCATION</scope>
</reference>
<reference key="13">
    <citation type="journal article" date="2007" name="EMBO Rep.">
        <title>ARC3 is a stromal Z-ring accessory protein essential for plastid division.</title>
        <authorList>
            <person name="Maple J."/>
            <person name="Vojta L."/>
            <person name="Soll J."/>
            <person name="Moeller S.G."/>
        </authorList>
    </citation>
    <scope>INTERACTION WITH ARC3</scope>
    <source>
        <strain>cv. Columbia</strain>
    </source>
</reference>
<reference key="14">
    <citation type="journal article" date="2007" name="J. Cell Sci.">
        <title>Interdependency of formation and localisation of the Min complex controls symmetric plastid division.</title>
        <authorList>
            <person name="Maple J."/>
            <person name="Moeller S.G."/>
        </authorList>
    </citation>
    <scope>INTERACTION WITH MINE1</scope>
</reference>
<reference key="15">
    <citation type="journal article" date="2007" name="Traffic">
        <title>Chloroplast division.</title>
        <authorList>
            <person name="Glynn J.M."/>
            <person name="Miyagishima S.-Y."/>
            <person name="Yoder D.W."/>
            <person name="Osteryoung K.W."/>
            <person name="Vitha S."/>
        </authorList>
    </citation>
    <scope>REVIEW</scope>
</reference>
<reference key="16">
    <citation type="journal article" date="2008" name="Plant Cell Physiol.">
        <title>The assembly of the FtsZ ring at the mid-chloroplast division site depends on a balance between the activities of AtMinE1 and ARC11/AtMinD1.</title>
        <authorList>
            <person name="Fujiwara M.T."/>
            <person name="Hashimoto H."/>
            <person name="Kazama Y."/>
            <person name="Abe T."/>
            <person name="Yoshida S."/>
            <person name="Sato N."/>
            <person name="Itoh R.D."/>
        </authorList>
    </citation>
    <scope>FUNCTION</scope>
    <scope>DISRUPTION PHENOTYPE</scope>
</reference>
<reference key="17">
    <citation type="journal article" date="2009" name="Biosci. Biotechnol. Biochem.">
        <title>Further evaluation of the localization and functionality of hemagglutinin epitope- and fluorescent protein-tagged AtMinD1 in Arabidopsis thaliana.</title>
        <authorList>
            <person name="Fujiwara M.T."/>
            <person name="Li D."/>
            <person name="Kazama Y."/>
            <person name="Abe T."/>
            <person name="Uno T."/>
            <person name="Yamagata H."/>
            <person name="Kanamaru K."/>
            <person name="Itoh R.D."/>
        </authorList>
    </citation>
    <scope>FUNCTION</scope>
    <scope>SUBCELLULAR LOCATION</scope>
    <scope>MUTAGENESIS OF ALA-296</scope>
    <source>
        <strain>cv. Landsberg erecta</strain>
    </source>
</reference>
<reference key="18">
    <citation type="journal article" date="2009" name="BMC Microbiol.">
        <title>A plant MinD homologue rescues Escherichia coli HL1 mutant (DeltaMinDE) in the absence of MinE.</title>
        <authorList>
            <person name="Zhang M."/>
            <person name="Hu Y."/>
            <person name="Jia J."/>
            <person name="Gao H."/>
            <person name="He Y."/>
        </authorList>
    </citation>
    <scope>FUNCTION IN E.COLI COMPLEMENTATION</scope>
</reference>
<reference key="19">
    <citation type="journal article" date="2009" name="Curr. Biol.">
        <title>Plant-specific protein MCD1 determines the site of chloroplast division in concert with bacteria-derived MinD.</title>
        <authorList>
            <person name="Nakanishi H."/>
            <person name="Suzuki K."/>
            <person name="Kabeya Y."/>
            <person name="Miyagishima S.Y."/>
        </authorList>
    </citation>
    <scope>INTERACTION WITH MCD1</scope>
</reference>
<reference key="20">
    <citation type="journal article" date="2013" name="PLoS ONE">
        <title>The chloroplast min system functions differentially in two specific nongreen plastids in Arabidopsis thaliana.</title>
        <authorList>
            <person name="Wang P."/>
            <person name="Zhang J."/>
            <person name="Su J."/>
            <person name="Wang P."/>
            <person name="Liu J."/>
            <person name="Liu B."/>
            <person name="Feng D."/>
            <person name="Wang J."/>
            <person name="Wang H."/>
        </authorList>
    </citation>
    <scope>FUNCTION</scope>
    <scope>DISRUPTION PHENOTYPE</scope>
    <source>
        <strain>cv. Columbia</strain>
        <strain>cv. Landsberg erecta</strain>
    </source>
</reference>
<reference key="21">
    <citation type="journal article" date="2018" name="Physiol. Plantarum">
        <title>Isolation and analysis of a stromule-overproducing Arabidopsis mutant suggest the role of PARC6 in plastid morphology maintenance in the leaf epidermis.</title>
        <authorList>
            <person name="Itoh R.D."/>
            <person name="Ishikawa H."/>
            <person name="Nakajima K.P."/>
            <person name="Moriyama S."/>
            <person name="Fujiwara M.T."/>
        </authorList>
    </citation>
    <scope>FUNCTION</scope>
    <scope>MUTAGENESIS OF ALA-296</scope>
    <scope>INTERACTION WITH CDP1/PARC6</scope>
    <source>
        <strain>cv. Columbia</strain>
    </source>
</reference>
<reference key="22">
    <citation type="journal article" date="2018" name="Plant Cell">
        <title>MCD1 associates with FtsZ filaments via the membrane-tethering protein ARC6 to guide chloroplast division.</title>
        <authorList>
            <person name="Chen L."/>
            <person name="Sun B."/>
            <person name="Gao W."/>
            <person name="Zhang Q.Y."/>
            <person name="Yuan H."/>
            <person name="Zhang M."/>
        </authorList>
    </citation>
    <scope>FUNCTION</scope>
    <scope>SUBCELLULAR LOCATION</scope>
    <source>
        <strain>cv. Columbia</strain>
    </source>
</reference>
<comment type="function">
    <text evidence="2 3 4 5 6 7 8 12 14 15 16 17 18">Together with ARC3 and MCD1, regulates FtsZ ring positioning in chloroplasts in an ARC6-dependent manner (PubMed:23936263, PubMed:28984364, PubMed:29967285). Calcium-dependent ATPase required for the correct placement of the plastid division site. Inhibits FtsZ filament and ring formation in the plastid. Mediates inhibition of plastid division (PubMed:28984364). In cooperation with MINE1, prevents FtsZ ring formation anywhere outside of the mid-plastids.</text>
</comment>
<comment type="activity regulation">
    <text evidence="8">Stimulated ATPase activity by MINE1.</text>
</comment>
<comment type="biophysicochemical properties">
    <kinetics>
        <KM evidence="8">500 uM for ATP (at pH 7.4 and 35 degrees Celsius)</KM>
    </kinetics>
    <phDependence>
        <text evidence="8">Optimum pH is 7.5-8. Active from pH 7 to 9.</text>
    </phDependence>
</comment>
<comment type="subunit">
    <text evidence="8 9 10 11 13 17 21">Homodimer (Probable). Interacts with MINE1 (PubMed:16014621, PubMed:16146521, PubMed:17855384). Binds to ARC3 (PubMed:17304239). Interacts with MCD1 (PubMed:19135368). Interacts with CDP1/PARC6 (PubMed:28984364).</text>
</comment>
<comment type="interaction">
    <interactant intactId="EBI-2119758">
        <id>Q9MBA2</id>
    </interactant>
    <interactant intactId="EBI-2119758">
        <id>Q9MBA2</id>
        <label>MIND1</label>
    </interactant>
    <organismsDiffer>false</organismsDiffer>
    <experiments>6</experiments>
</comment>
<comment type="interaction">
    <interactant intactId="EBI-2119758">
        <id>Q9MBA2</id>
    </interactant>
    <interactant intactId="EBI-2119860">
        <id>Q9C4Z7</id>
        <label>MINE1</label>
    </interactant>
    <organismsDiffer>false</organismsDiffer>
    <experiments>6</experiments>
</comment>
<comment type="subcellular location">
    <subcellularLocation>
        <location evidence="3 4 7 8 9 15">Plastid</location>
        <location evidence="3 4 7 8 9 15">Chloroplast inner membrane</location>
        <topology evidence="3 4 7 8 9 15">Peripheral membrane protein</topology>
    </subcellularLocation>
    <text evidence="18">Attached to membranes in punctate structures dispersed on the inner envelope and at the mid-chloroplast division site in an ATPase activity-dependent manner (PubMed:29967285). Also present at the chloroplast to a ring structure at the constriction site (PubMed:29967285).</text>
</comment>
<comment type="induction">
    <text evidence="4">Accumulates during seed germination, at the beginning of rapid greening.</text>
</comment>
<comment type="disruption phenotype">
    <text evidence="12 16">Heterogeneous population of chloroplasts in mesophyll cells and petals, with normal and larger plastids, due to reduced chloroplast divisions and asymmetrically constricted chloroplasts (PubMed:18204083, PubMed:23936263). Contains highly elongated and multiple-arrayed chloroplasts in developing green tissues (PubMed:18204083). Formation of some FtsZ rings that fail to initiate or progress the membrane constriction of developing chloroplasts (PubMed:18204083). Normal shape and number of etioplasts in cotyledons (PubMed:23936263).</text>
</comment>
<comment type="similarity">
    <text evidence="21">Belongs to the ParA family. MinD subfamily.</text>
</comment>
<accession>Q9MBA2</accession>
<sequence length="326" mass="35690">MASLRLFSTNHQSLLLPSSLSQKTLISSPRFVNNPSRRSPIRSVLQFNRKPELAGETPRIVVITSGKGGVGKTTTTANVGLSLARYGFSVVAIDADLGLRNLDLLLGLENRVNYTCVEVINGDCRLDQALVRDKRWSNFELLCISKPRSKLPMGFGGKALEWLVDALKTRPEGSPDFIIIDCPAGIDAGFITAITPANEAVLVTTPDITALRDADRVTGLLECDGIRDIKMIVNRVRTDMIKGEDMMSVLDVQEMLGLSLLGVIPEDSEVIRSTNRGFPLVLNKPPTLAGLAFEQAAWRLVEQDSMKAVMVEEEPKKRGFFSFFGG</sequence>
<organism>
    <name type="scientific">Arabidopsis thaliana</name>
    <name type="common">Mouse-ear cress</name>
    <dbReference type="NCBI Taxonomy" id="3702"/>
    <lineage>
        <taxon>Eukaryota</taxon>
        <taxon>Viridiplantae</taxon>
        <taxon>Streptophyta</taxon>
        <taxon>Embryophyta</taxon>
        <taxon>Tracheophyta</taxon>
        <taxon>Spermatophyta</taxon>
        <taxon>Magnoliopsida</taxon>
        <taxon>eudicotyledons</taxon>
        <taxon>Gunneridae</taxon>
        <taxon>Pentapetalae</taxon>
        <taxon>rosids</taxon>
        <taxon>malvids</taxon>
        <taxon>Brassicales</taxon>
        <taxon>Brassicaceae</taxon>
        <taxon>Camelineae</taxon>
        <taxon>Arabidopsis</taxon>
    </lineage>
</organism>
<keyword id="KW-0067">ATP-binding</keyword>
<keyword id="KW-0150">Chloroplast</keyword>
<keyword id="KW-0472">Membrane</keyword>
<keyword id="KW-0547">Nucleotide-binding</keyword>
<keyword id="KW-0934">Plastid</keyword>
<keyword id="KW-1001">Plastid inner membrane</keyword>
<keyword id="KW-1185">Reference proteome</keyword>
<keyword id="KW-0809">Transit peptide</keyword>
<name>MIND1_ARATH</name>
<proteinExistence type="evidence at protein level"/>
<gene>
    <name evidence="20" type="primary">MIND1</name>
    <name evidence="19" type="synonym">ARC11</name>
    <name evidence="22" type="ordered locus">At5g24020</name>
    <name evidence="23" type="ORF">MZF18.10</name>
</gene>
<evidence type="ECO:0000250" key="1">
    <source>
        <dbReference type="UniProtKB" id="Q72H90"/>
    </source>
</evidence>
<evidence type="ECO:0000269" key="2">
    <source>
    </source>
</evidence>
<evidence type="ECO:0000269" key="3">
    <source>
    </source>
</evidence>
<evidence type="ECO:0000269" key="4">
    <source>
    </source>
</evidence>
<evidence type="ECO:0000269" key="5">
    <source>
    </source>
</evidence>
<evidence type="ECO:0000269" key="6">
    <source>
    </source>
</evidence>
<evidence type="ECO:0000269" key="7">
    <source>
    </source>
</evidence>
<evidence type="ECO:0000269" key="8">
    <source>
    </source>
</evidence>
<evidence type="ECO:0000269" key="9">
    <source>
    </source>
</evidence>
<evidence type="ECO:0000269" key="10">
    <source>
    </source>
</evidence>
<evidence type="ECO:0000269" key="11">
    <source>
    </source>
</evidence>
<evidence type="ECO:0000269" key="12">
    <source>
    </source>
</evidence>
<evidence type="ECO:0000269" key="13">
    <source>
    </source>
</evidence>
<evidence type="ECO:0000269" key="14">
    <source>
    </source>
</evidence>
<evidence type="ECO:0000269" key="15">
    <source>
    </source>
</evidence>
<evidence type="ECO:0000269" key="16">
    <source>
    </source>
</evidence>
<evidence type="ECO:0000269" key="17">
    <source>
    </source>
</evidence>
<evidence type="ECO:0000269" key="18">
    <source>
    </source>
</evidence>
<evidence type="ECO:0000303" key="19">
    <source>
    </source>
</evidence>
<evidence type="ECO:0000303" key="20">
    <source>
    </source>
</evidence>
<evidence type="ECO:0000305" key="21"/>
<evidence type="ECO:0000312" key="22">
    <source>
        <dbReference type="Araport" id="AT5G24020"/>
    </source>
</evidence>
<evidence type="ECO:0000312" key="23">
    <source>
        <dbReference type="EMBL" id="BAB08725.1"/>
    </source>
</evidence>
<protein>
    <recommendedName>
        <fullName evidence="20">Septum site-determining protein minD homolog, chloroplastic</fullName>
        <shortName evidence="20">AtMinD1</shortName>
    </recommendedName>
    <alternativeName>
        <fullName evidence="19">Protein ACCUMULATION AND REPLICATION OF CHLOROPLASTS 11</fullName>
    </alternativeName>
    <alternativeName>
        <fullName evidence="20">Septum site-determining protein MinD1</fullName>
    </alternativeName>
</protein>